<dbReference type="EC" id="2.1.1.186" evidence="1"/>
<dbReference type="EMBL" id="CP000266">
    <property type="protein sequence ID" value="ABF04961.1"/>
    <property type="molecule type" value="Genomic_DNA"/>
</dbReference>
<dbReference type="RefSeq" id="WP_001045525.1">
    <property type="nucleotide sequence ID" value="NC_008258.1"/>
</dbReference>
<dbReference type="SMR" id="Q0T154"/>
<dbReference type="KEGG" id="sfv:SFV_2885"/>
<dbReference type="HOGENOM" id="CLU_043780_0_0_6"/>
<dbReference type="Proteomes" id="UP000000659">
    <property type="component" value="Chromosome"/>
</dbReference>
<dbReference type="GO" id="GO:0005737">
    <property type="term" value="C:cytoplasm"/>
    <property type="evidence" value="ECO:0007669"/>
    <property type="project" value="UniProtKB-SubCell"/>
</dbReference>
<dbReference type="GO" id="GO:0008757">
    <property type="term" value="F:S-adenosylmethionine-dependent methyltransferase activity"/>
    <property type="evidence" value="ECO:0007669"/>
    <property type="project" value="UniProtKB-UniRule"/>
</dbReference>
<dbReference type="GO" id="GO:0032259">
    <property type="term" value="P:methylation"/>
    <property type="evidence" value="ECO:0007669"/>
    <property type="project" value="UniProtKB-KW"/>
</dbReference>
<dbReference type="GO" id="GO:0006364">
    <property type="term" value="P:rRNA processing"/>
    <property type="evidence" value="ECO:0007669"/>
    <property type="project" value="UniProtKB-UniRule"/>
</dbReference>
<dbReference type="FunFam" id="3.30.2300.20:FF:000001">
    <property type="entry name" value="Ribosomal RNA large subunit methyltransferase M"/>
    <property type="match status" value="1"/>
</dbReference>
<dbReference type="FunFam" id="3.30.70.2810:FF:000001">
    <property type="entry name" value="Ribosomal RNA large subunit methyltransferase M"/>
    <property type="match status" value="1"/>
</dbReference>
<dbReference type="FunFam" id="3.40.50.150:FF:000020">
    <property type="entry name" value="Ribosomal RNA large subunit methyltransferase M"/>
    <property type="match status" value="1"/>
</dbReference>
<dbReference type="Gene3D" id="3.30.2300.20">
    <property type="match status" value="1"/>
</dbReference>
<dbReference type="Gene3D" id="3.30.70.2810">
    <property type="match status" value="1"/>
</dbReference>
<dbReference type="Gene3D" id="3.40.50.150">
    <property type="entry name" value="Vaccinia Virus protein VP39"/>
    <property type="match status" value="1"/>
</dbReference>
<dbReference type="HAMAP" id="MF_01551">
    <property type="entry name" value="23SrRNA_methyltr_M"/>
    <property type="match status" value="1"/>
</dbReference>
<dbReference type="InterPro" id="IPR040739">
    <property type="entry name" value="RlmM_FDX"/>
</dbReference>
<dbReference type="InterPro" id="IPR048646">
    <property type="entry name" value="RlmM_THUMP-like"/>
</dbReference>
<dbReference type="InterPro" id="IPR002877">
    <property type="entry name" value="RNA_MeTrfase_FtsJ_dom"/>
</dbReference>
<dbReference type="InterPro" id="IPR011224">
    <property type="entry name" value="rRNA_MeTrfase_M"/>
</dbReference>
<dbReference type="InterPro" id="IPR029063">
    <property type="entry name" value="SAM-dependent_MTases_sf"/>
</dbReference>
<dbReference type="NCBIfam" id="NF008734">
    <property type="entry name" value="PRK11760.1"/>
    <property type="match status" value="1"/>
</dbReference>
<dbReference type="PANTHER" id="PTHR37524">
    <property type="entry name" value="RIBOSOMAL RNA LARGE SUBUNIT METHYLTRANSFERASE M"/>
    <property type="match status" value="1"/>
</dbReference>
<dbReference type="PANTHER" id="PTHR37524:SF2">
    <property type="entry name" value="RIBOSOMAL RNA METHYLTRANSFERASE FTSJ DOMAIN-CONTAINING PROTEIN"/>
    <property type="match status" value="1"/>
</dbReference>
<dbReference type="Pfam" id="PF01728">
    <property type="entry name" value="FtsJ"/>
    <property type="match status" value="1"/>
</dbReference>
<dbReference type="Pfam" id="PF18125">
    <property type="entry name" value="RlmM_FDX"/>
    <property type="match status" value="1"/>
</dbReference>
<dbReference type="Pfam" id="PF21239">
    <property type="entry name" value="RLMM_N"/>
    <property type="match status" value="1"/>
</dbReference>
<dbReference type="PIRSF" id="PIRSF028774">
    <property type="entry name" value="UCP028774"/>
    <property type="match status" value="1"/>
</dbReference>
<dbReference type="SUPFAM" id="SSF53335">
    <property type="entry name" value="S-adenosyl-L-methionine-dependent methyltransferases"/>
    <property type="match status" value="1"/>
</dbReference>
<name>RLMM_SHIF8</name>
<proteinExistence type="inferred from homology"/>
<sequence length="366" mass="41919">MNKVVLLCRPGFEKECAAEITDKAGQREIFGFARVKENAGYVIYECYQPDDGDKLIRELPFSSLIFARQWFVVGELLQHLPPEDRITPIVGMLQGVVEKGGELRVEVADTNESKELLKFCRKFTVPLRAALRDAGVLANYETPKRPVVHVFFIAPGCCYTGYSYSNNNSPFYMGIPRLKFPAEAPSRSTLKLEEAFHVFIPADEWDERLANGMWAVDLGACPGGWTYQLVKRNMWVYSVDNGPMAQSLMDTGQVTWLREDGFKFRPTRSNISWMVCDMVEKPAKVAALMAQWLVNGWCRETIFNLKLPMKKRYEEVSHNLAYIQAQLDEHGINAQIQARQLYHDREEVTVHVRRIWAAVGGRRDER</sequence>
<feature type="chain" id="PRO_0000314546" description="Ribosomal RNA large subunit methyltransferase M">
    <location>
        <begin position="1"/>
        <end position="366"/>
    </location>
</feature>
<feature type="active site" description="Proton acceptor" evidence="1">
    <location>
        <position position="306"/>
    </location>
</feature>
<feature type="binding site" evidence="1">
    <location>
        <position position="188"/>
    </location>
    <ligand>
        <name>S-adenosyl-L-methionine</name>
        <dbReference type="ChEBI" id="CHEBI:59789"/>
    </ligand>
</feature>
<feature type="binding site" evidence="1">
    <location>
        <begin position="221"/>
        <end position="224"/>
    </location>
    <ligand>
        <name>S-adenosyl-L-methionine</name>
        <dbReference type="ChEBI" id="CHEBI:59789"/>
    </ligand>
</feature>
<feature type="binding site" evidence="1">
    <location>
        <position position="240"/>
    </location>
    <ligand>
        <name>S-adenosyl-L-methionine</name>
        <dbReference type="ChEBI" id="CHEBI:59789"/>
    </ligand>
</feature>
<feature type="binding site" evidence="1">
    <location>
        <position position="260"/>
    </location>
    <ligand>
        <name>S-adenosyl-L-methionine</name>
        <dbReference type="ChEBI" id="CHEBI:59789"/>
    </ligand>
</feature>
<feature type="binding site" evidence="1">
    <location>
        <position position="277"/>
    </location>
    <ligand>
        <name>S-adenosyl-L-methionine</name>
        <dbReference type="ChEBI" id="CHEBI:59789"/>
    </ligand>
</feature>
<gene>
    <name evidence="1" type="primary">rlmM</name>
    <name type="ordered locus">SFV_2885</name>
</gene>
<reference key="1">
    <citation type="journal article" date="2006" name="BMC Genomics">
        <title>Complete genome sequence of Shigella flexneri 5b and comparison with Shigella flexneri 2a.</title>
        <authorList>
            <person name="Nie H."/>
            <person name="Yang F."/>
            <person name="Zhang X."/>
            <person name="Yang J."/>
            <person name="Chen L."/>
            <person name="Wang J."/>
            <person name="Xiong Z."/>
            <person name="Peng J."/>
            <person name="Sun L."/>
            <person name="Dong J."/>
            <person name="Xue Y."/>
            <person name="Xu X."/>
            <person name="Chen S."/>
            <person name="Yao Z."/>
            <person name="Shen Y."/>
            <person name="Jin Q."/>
        </authorList>
    </citation>
    <scope>NUCLEOTIDE SEQUENCE [LARGE SCALE GENOMIC DNA]</scope>
    <source>
        <strain>8401</strain>
    </source>
</reference>
<keyword id="KW-0963">Cytoplasm</keyword>
<keyword id="KW-0489">Methyltransferase</keyword>
<keyword id="KW-0698">rRNA processing</keyword>
<keyword id="KW-0949">S-adenosyl-L-methionine</keyword>
<keyword id="KW-0808">Transferase</keyword>
<accession>Q0T154</accession>
<comment type="function">
    <text evidence="1">Catalyzes the 2'-O-methylation at nucleotide C2498 in 23S rRNA.</text>
</comment>
<comment type="catalytic activity">
    <reaction evidence="1">
        <text>cytidine(2498) in 23S rRNA + S-adenosyl-L-methionine = 2'-O-methylcytidine(2498) in 23S rRNA + S-adenosyl-L-homocysteine + H(+)</text>
        <dbReference type="Rhea" id="RHEA:42788"/>
        <dbReference type="Rhea" id="RHEA-COMP:10244"/>
        <dbReference type="Rhea" id="RHEA-COMP:10245"/>
        <dbReference type="ChEBI" id="CHEBI:15378"/>
        <dbReference type="ChEBI" id="CHEBI:57856"/>
        <dbReference type="ChEBI" id="CHEBI:59789"/>
        <dbReference type="ChEBI" id="CHEBI:74495"/>
        <dbReference type="ChEBI" id="CHEBI:82748"/>
        <dbReference type="EC" id="2.1.1.186"/>
    </reaction>
</comment>
<comment type="subunit">
    <text evidence="1">Monomer.</text>
</comment>
<comment type="subcellular location">
    <subcellularLocation>
        <location evidence="1">Cytoplasm</location>
    </subcellularLocation>
</comment>
<comment type="similarity">
    <text evidence="1">Belongs to the class I-like SAM-binding methyltransferase superfamily. RNA methyltransferase RlmE family. RlmM subfamily.</text>
</comment>
<evidence type="ECO:0000255" key="1">
    <source>
        <dbReference type="HAMAP-Rule" id="MF_01551"/>
    </source>
</evidence>
<protein>
    <recommendedName>
        <fullName evidence="1">Ribosomal RNA large subunit methyltransferase M</fullName>
        <ecNumber evidence="1">2.1.1.186</ecNumber>
    </recommendedName>
    <alternativeName>
        <fullName evidence="1">23S rRNA (cytidine2498-2'-O)-methyltransferase</fullName>
    </alternativeName>
    <alternativeName>
        <fullName evidence="1">23S rRNA 2'-O-ribose methyltransferase RlmM</fullName>
    </alternativeName>
</protein>
<organism>
    <name type="scientific">Shigella flexneri serotype 5b (strain 8401)</name>
    <dbReference type="NCBI Taxonomy" id="373384"/>
    <lineage>
        <taxon>Bacteria</taxon>
        <taxon>Pseudomonadati</taxon>
        <taxon>Pseudomonadota</taxon>
        <taxon>Gammaproteobacteria</taxon>
        <taxon>Enterobacterales</taxon>
        <taxon>Enterobacteriaceae</taxon>
        <taxon>Shigella</taxon>
    </lineage>
</organism>